<organism>
    <name type="scientific">Chara vulgaris</name>
    <name type="common">Common stonewort</name>
    <dbReference type="NCBI Taxonomy" id="55564"/>
    <lineage>
        <taxon>Eukaryota</taxon>
        <taxon>Viridiplantae</taxon>
        <taxon>Streptophyta</taxon>
        <taxon>Charophyceae</taxon>
        <taxon>Charales</taxon>
        <taxon>Characeae</taxon>
        <taxon>Chara</taxon>
    </lineage>
</organism>
<comment type="function">
    <text evidence="1">NDH shuttles electrons from NAD(P)H:plastoquinone, via FMN and iron-sulfur (Fe-S) centers, to quinones in the photosynthetic chain and possibly in a chloroplast respiratory chain. The immediate electron acceptor for the enzyme in this species is believed to be plastoquinone. Couples the redox reaction to proton translocation, and thus conserves the redox energy in a proton gradient (By similarity).</text>
</comment>
<comment type="catalytic activity">
    <reaction>
        <text>a plastoquinone + NADH + (n+1) H(+)(in) = a plastoquinol + NAD(+) + n H(+)(out)</text>
        <dbReference type="Rhea" id="RHEA:42608"/>
        <dbReference type="Rhea" id="RHEA-COMP:9561"/>
        <dbReference type="Rhea" id="RHEA-COMP:9562"/>
        <dbReference type="ChEBI" id="CHEBI:15378"/>
        <dbReference type="ChEBI" id="CHEBI:17757"/>
        <dbReference type="ChEBI" id="CHEBI:57540"/>
        <dbReference type="ChEBI" id="CHEBI:57945"/>
        <dbReference type="ChEBI" id="CHEBI:62192"/>
    </reaction>
</comment>
<comment type="catalytic activity">
    <reaction>
        <text>a plastoquinone + NADPH + (n+1) H(+)(in) = a plastoquinol + NADP(+) + n H(+)(out)</text>
        <dbReference type="Rhea" id="RHEA:42612"/>
        <dbReference type="Rhea" id="RHEA-COMP:9561"/>
        <dbReference type="Rhea" id="RHEA-COMP:9562"/>
        <dbReference type="ChEBI" id="CHEBI:15378"/>
        <dbReference type="ChEBI" id="CHEBI:17757"/>
        <dbReference type="ChEBI" id="CHEBI:57783"/>
        <dbReference type="ChEBI" id="CHEBI:58349"/>
        <dbReference type="ChEBI" id="CHEBI:62192"/>
    </reaction>
</comment>
<comment type="subunit">
    <text evidence="1">NDH is composed of at least 16 different subunits, 5 of which are encoded in the nucleus.</text>
</comment>
<comment type="subcellular location">
    <subcellularLocation>
        <location evidence="1">Plastid</location>
        <location evidence="1">Chloroplast thylakoid membrane</location>
        <topology evidence="1">Multi-pass membrane protein</topology>
    </subcellularLocation>
</comment>
<comment type="similarity">
    <text evidence="3">Belongs to the complex I subunit 5 family.</text>
</comment>
<proteinExistence type="inferred from homology"/>
<accession>Q1ACF3</accession>
<keyword id="KW-0150">Chloroplast</keyword>
<keyword id="KW-0472">Membrane</keyword>
<keyword id="KW-0520">NAD</keyword>
<keyword id="KW-0521">NADP</keyword>
<keyword id="KW-0934">Plastid</keyword>
<keyword id="KW-0618">Plastoquinone</keyword>
<keyword id="KW-0874">Quinone</keyword>
<keyword id="KW-0793">Thylakoid</keyword>
<keyword id="KW-1278">Translocase</keyword>
<keyword id="KW-0812">Transmembrane</keyword>
<keyword id="KW-1133">Transmembrane helix</keyword>
<keyword id="KW-0813">Transport</keyword>
<sequence length="663" mass="75255">MDFIFHYQSSWLIPMLPFLSAFVAGFGLISFRLPTRSLRHLYGLISTITVFFSMIISMNLLWKYIIGHSNYCFLFPWIVNDNISLKLGFFIDPLSSLMLFLVTSVAVLVMSYSHGYMSHDQSYVRFFAYLSLFTASMLGLVLSPNLFQIYIFWELVGMCSYLLIGFWFTRPNAASACQKAFITNRIGDFCLLLGILGLYWFTNSFDFITVTKRTEEIISNNNSHLYFFIFCSFLLFCGPIAKSAQFPLHIWLPDAMEGPTPISALIHAATMVAAGIFLVARLFPLFQLFPSIMNLITCIGILTAFLGSTIALSQIDLKKSLAYSTISQLGYMMVAMGIGSYKAGLFHLVTHAYSKALLFLGSGSVIHNLEPLLGYNPENNQNLVFMGGLGKSMPITRFTFLIGTLSLCGVPPFACFWSKDEIIADAWKYNFNLGLIAWITAGLTGFYMFRVYLLAFEGDFRGIIFLNKNNLKSTKEVHESNLYMLIPLIILSFLSLFIGFISTPFHDYLYIFLDSPIVYDNETSYFQILLNFSSIGVALIGMIIAYSIYAYNNISIDFGFFKRSLKKIYFEFYQFSFSKWYIEVFYHSLFLSGTRNLAQLLFYLDQWLFDGVVNLTGISTLLGGQSLKYKESGRVSSYLFSILIGALVLFFFLPLHNSQIGSN</sequence>
<name>NU5C_CHAVU</name>
<feature type="chain" id="PRO_0000360920" description="NAD(P)H-quinone oxidoreductase subunit 5, chloroplastic">
    <location>
        <begin position="1"/>
        <end position="663"/>
    </location>
</feature>
<feature type="transmembrane region" description="Helical" evidence="2">
    <location>
        <begin position="11"/>
        <end position="31"/>
    </location>
</feature>
<feature type="transmembrane region" description="Helical" evidence="2">
    <location>
        <begin position="41"/>
        <end position="61"/>
    </location>
</feature>
<feature type="transmembrane region" description="Helical" evidence="2">
    <location>
        <begin position="89"/>
        <end position="109"/>
    </location>
</feature>
<feature type="transmembrane region" description="Helical" evidence="2">
    <location>
        <begin position="126"/>
        <end position="146"/>
    </location>
</feature>
<feature type="transmembrane region" description="Helical" evidence="2">
    <location>
        <begin position="149"/>
        <end position="169"/>
    </location>
</feature>
<feature type="transmembrane region" description="Helical" evidence="2">
    <location>
        <begin position="189"/>
        <end position="209"/>
    </location>
</feature>
<feature type="transmembrane region" description="Helical" evidence="2">
    <location>
        <begin position="224"/>
        <end position="244"/>
    </location>
</feature>
<feature type="transmembrane region" description="Helical" evidence="2">
    <location>
        <begin position="260"/>
        <end position="280"/>
    </location>
</feature>
<feature type="transmembrane region" description="Helical" evidence="2">
    <location>
        <begin position="292"/>
        <end position="312"/>
    </location>
</feature>
<feature type="transmembrane region" description="Helical" evidence="2">
    <location>
        <begin position="329"/>
        <end position="349"/>
    </location>
</feature>
<feature type="transmembrane region" description="Helical" evidence="2">
    <location>
        <begin position="398"/>
        <end position="418"/>
    </location>
</feature>
<feature type="transmembrane region" description="Helical" evidence="2">
    <location>
        <begin position="436"/>
        <end position="456"/>
    </location>
</feature>
<feature type="transmembrane region" description="Helical" evidence="2">
    <location>
        <begin position="482"/>
        <end position="502"/>
    </location>
</feature>
<feature type="transmembrane region" description="Helical" evidence="2">
    <location>
        <begin position="528"/>
        <end position="548"/>
    </location>
</feature>
<feature type="transmembrane region" description="Helical" evidence="2">
    <location>
        <begin position="607"/>
        <end position="627"/>
    </location>
</feature>
<feature type="transmembrane region" description="Helical" evidence="2">
    <location>
        <begin position="635"/>
        <end position="655"/>
    </location>
</feature>
<dbReference type="EC" id="7.1.1.-"/>
<dbReference type="EMBL" id="DQ229107">
    <property type="protein sequence ID" value="ABA61924.1"/>
    <property type="molecule type" value="Genomic_DNA"/>
</dbReference>
<dbReference type="RefSeq" id="YP_635794.1">
    <property type="nucleotide sequence ID" value="NC_008097.1"/>
</dbReference>
<dbReference type="SMR" id="Q1ACF3"/>
<dbReference type="GeneID" id="4100211"/>
<dbReference type="GO" id="GO:0009535">
    <property type="term" value="C:chloroplast thylakoid membrane"/>
    <property type="evidence" value="ECO:0007669"/>
    <property type="project" value="UniProtKB-SubCell"/>
</dbReference>
<dbReference type="GO" id="GO:0008137">
    <property type="term" value="F:NADH dehydrogenase (ubiquinone) activity"/>
    <property type="evidence" value="ECO:0007669"/>
    <property type="project" value="InterPro"/>
</dbReference>
<dbReference type="GO" id="GO:0048038">
    <property type="term" value="F:quinone binding"/>
    <property type="evidence" value="ECO:0007669"/>
    <property type="project" value="UniProtKB-KW"/>
</dbReference>
<dbReference type="GO" id="GO:0042773">
    <property type="term" value="P:ATP synthesis coupled electron transport"/>
    <property type="evidence" value="ECO:0007669"/>
    <property type="project" value="InterPro"/>
</dbReference>
<dbReference type="GO" id="GO:0015990">
    <property type="term" value="P:electron transport coupled proton transport"/>
    <property type="evidence" value="ECO:0007669"/>
    <property type="project" value="TreeGrafter"/>
</dbReference>
<dbReference type="Gene3D" id="1.20.5.2700">
    <property type="match status" value="1"/>
</dbReference>
<dbReference type="InterPro" id="IPR002128">
    <property type="entry name" value="NADH_UbQ_OxRdtase_chlpt_su5_C"/>
</dbReference>
<dbReference type="InterPro" id="IPR018393">
    <property type="entry name" value="NADHpl_OxRdtase_5_subgr"/>
</dbReference>
<dbReference type="InterPro" id="IPR001750">
    <property type="entry name" value="ND/Mrp_TM"/>
</dbReference>
<dbReference type="InterPro" id="IPR003945">
    <property type="entry name" value="NU5C-like"/>
</dbReference>
<dbReference type="InterPro" id="IPR001516">
    <property type="entry name" value="Proton_antipo_N"/>
</dbReference>
<dbReference type="NCBIfam" id="TIGR01974">
    <property type="entry name" value="NDH_I_L"/>
    <property type="match status" value="1"/>
</dbReference>
<dbReference type="NCBIfam" id="NF005141">
    <property type="entry name" value="PRK06590.1"/>
    <property type="match status" value="1"/>
</dbReference>
<dbReference type="PANTHER" id="PTHR42829">
    <property type="entry name" value="NADH-UBIQUINONE OXIDOREDUCTASE CHAIN 5"/>
    <property type="match status" value="1"/>
</dbReference>
<dbReference type="PANTHER" id="PTHR42829:SF2">
    <property type="entry name" value="NADH-UBIQUINONE OXIDOREDUCTASE CHAIN 5"/>
    <property type="match status" value="1"/>
</dbReference>
<dbReference type="Pfam" id="PF01010">
    <property type="entry name" value="Proton_antipo_C"/>
    <property type="match status" value="1"/>
</dbReference>
<dbReference type="Pfam" id="PF00361">
    <property type="entry name" value="Proton_antipo_M"/>
    <property type="match status" value="1"/>
</dbReference>
<dbReference type="Pfam" id="PF00662">
    <property type="entry name" value="Proton_antipo_N"/>
    <property type="match status" value="1"/>
</dbReference>
<dbReference type="PRINTS" id="PR01434">
    <property type="entry name" value="NADHDHGNASE5"/>
</dbReference>
<dbReference type="PRINTS" id="PR01435">
    <property type="entry name" value="NPOXDRDTASE5"/>
</dbReference>
<gene>
    <name type="primary">ndhF</name>
</gene>
<evidence type="ECO:0000250" key="1"/>
<evidence type="ECO:0000255" key="2"/>
<evidence type="ECO:0000305" key="3"/>
<reference key="1">
    <citation type="journal article" date="2006" name="Mol. Biol. Evol.">
        <title>The chloroplast genome sequence of Chara vulgaris sheds new light into the closest green algal relatives of land plants.</title>
        <authorList>
            <person name="Turmel M."/>
            <person name="Otis C."/>
            <person name="Lemieux C."/>
        </authorList>
    </citation>
    <scope>NUCLEOTIDE SEQUENCE [LARGE SCALE GENOMIC DNA]</scope>
</reference>
<geneLocation type="chloroplast"/>
<protein>
    <recommendedName>
        <fullName>NAD(P)H-quinone oxidoreductase subunit 5, chloroplastic</fullName>
        <ecNumber>7.1.1.-</ecNumber>
    </recommendedName>
    <alternativeName>
        <fullName>NAD(P)H dehydrogenase subunit 5</fullName>
    </alternativeName>
    <alternativeName>
        <fullName>NADH-plastoquinone oxidoreductase subunit 5</fullName>
    </alternativeName>
</protein>